<sequence length="13" mass="1418">GFGMALKLLKKVL</sequence>
<protein>
    <recommendedName>
        <fullName evidence="4">Macropin</fullName>
    </recommendedName>
    <alternativeName>
        <fullName evidence="4">MAC-1</fullName>
    </alternativeName>
</protein>
<dbReference type="GO" id="GO:0005576">
    <property type="term" value="C:extracellular region"/>
    <property type="evidence" value="ECO:0000314"/>
    <property type="project" value="UniProtKB"/>
</dbReference>
<dbReference type="GO" id="GO:0016020">
    <property type="term" value="C:membrane"/>
    <property type="evidence" value="ECO:0007669"/>
    <property type="project" value="UniProtKB-KW"/>
</dbReference>
<dbReference type="GO" id="GO:0044218">
    <property type="term" value="C:other organism cell membrane"/>
    <property type="evidence" value="ECO:0007669"/>
    <property type="project" value="UniProtKB-KW"/>
</dbReference>
<dbReference type="GO" id="GO:0050832">
    <property type="term" value="P:defense response to fungus"/>
    <property type="evidence" value="ECO:0000314"/>
    <property type="project" value="UniProtKB"/>
</dbReference>
<dbReference type="GO" id="GO:0050829">
    <property type="term" value="P:defense response to Gram-negative bacterium"/>
    <property type="evidence" value="ECO:0000314"/>
    <property type="project" value="UniProtKB"/>
</dbReference>
<dbReference type="GO" id="GO:0050830">
    <property type="term" value="P:defense response to Gram-positive bacterium"/>
    <property type="evidence" value="ECO:0000314"/>
    <property type="project" value="UniProtKB"/>
</dbReference>
<dbReference type="GO" id="GO:0051673">
    <property type="term" value="P:disruption of plasma membrane integrity in another organism"/>
    <property type="evidence" value="ECO:0000314"/>
    <property type="project" value="UniProtKB"/>
</dbReference>
<dbReference type="GO" id="GO:0031640">
    <property type="term" value="P:killing of cells of another organism"/>
    <property type="evidence" value="ECO:0000314"/>
    <property type="project" value="UniProtKB"/>
</dbReference>
<evidence type="ECO:0000269" key="1">
    <source>
    </source>
</evidence>
<evidence type="ECO:0000269" key="2">
    <source>
    </source>
</evidence>
<evidence type="ECO:0000269" key="3">
    <source>
    </source>
</evidence>
<evidence type="ECO:0000303" key="4">
    <source>
    </source>
</evidence>
<evidence type="ECO:0000305" key="5"/>
<evidence type="ECO:0000305" key="6">
    <source>
    </source>
</evidence>
<comment type="function">
    <text evidence="1 2 3">Antimicrobial peptide with activity against Gram-positive bacteria (B.subtilis, S.aureus and L.monocytogenes) and Gram-negative bacteria (E.coli and P.aeruginosa) (MIC=1.3-35 uM) (PubMed:24616110, PubMed:29185466). Also active against fungus C.albicans (MIC=6.3 uM) (PubMed:24616110). Has little hemolytic activity (PubMed:24616110, PubMed:29185466). Acts by disrupting membranes and bacterial cell wall structures (PubMed:29185466). Binds to peptidoglycan and lipopolysaccharide (LPS) (PubMed:29185466). In the context of inflammation and cancer tests, is weakly cytotoxic to normal cells, induces calcium signaling but does not impact cAMP production (PubMed:36548715). In addition, prevents LPS-induced nitric oxid (NO) synthesis but does not affect the IP3 signaling and pro-inflammatory activation of endothelial cells (PubMed:36548715). Does not show significant antiproliferative activity on the breast cancer cell line MDA-MB-231 (PubMed:36548715).</text>
</comment>
<comment type="subcellular location">
    <subcellularLocation>
        <location evidence="1">Secreted</location>
    </subcellularLocation>
    <subcellularLocation>
        <location evidence="1 2">Target cell membrane</location>
    </subcellularLocation>
    <text evidence="1 2">Adopts an alpha-helical structure in a membrane mimic environment.</text>
</comment>
<comment type="tissue specificity">
    <text evidence="6">Expressed by the venom gland.</text>
</comment>
<comment type="mass spectrometry" mass="1416.1" error="0.1" method="Electrospray" evidence="1"/>
<comment type="similarity">
    <text evidence="5">Belongs to the lasioglossin-like family.</text>
</comment>
<reference evidence="5" key="1">
    <citation type="journal article" date="2014" name="J. Pept. Sci.">
        <title>Structure-activity study of macropin, a novel antimicrobial peptide from the venom of solitary bee Macropis fulvipes (Hymenoptera: Melittidae).</title>
        <authorList>
            <person name="Monincova L."/>
            <person name="Veverka V."/>
            <person name="Slaninova J."/>
            <person name="Budesinsky M."/>
            <person name="Fucik V."/>
            <person name="Bednarova L."/>
            <person name="Straka J."/>
            <person name="Cerovsky V."/>
        </authorList>
    </citation>
    <scope>PROTEIN SEQUENCE</scope>
    <scope>FUNCTION</scope>
    <scope>SUBCELLULAR LOCATION</scope>
    <scope>MASS SPECTROMETRY</scope>
    <scope>AMIDATION AT LEU-13</scope>
    <scope>STRUCTURE BY NMR</scope>
    <scope>MUTAGENESIS OF GLY-1; GLY-3 AND MET-4</scope>
    <source>
        <tissue evidence="4">Venom</tissue>
    </source>
</reference>
<reference evidence="5" key="2">
    <citation type="journal article" date="2017" name="Sci. Rep.">
        <title>Macropis fulvipes Venom component Macropin Exerts its Antibacterial and Anti-Biofilm Properties by Damaging the Plasma Membranes of Drug Resistant Bacteria.</title>
        <authorList>
            <person name="Ko S.J."/>
            <person name="Kim M.K."/>
            <person name="Bang J.K."/>
            <person name="Seo C.H."/>
            <person name="Luchian T."/>
            <person name="Park Y."/>
        </authorList>
    </citation>
    <scope>FUNCTION</scope>
</reference>
<reference key="3">
    <citation type="journal article" date="2022" name="Toxins">
        <title>The pharmacological potential of novel melittin variants from the honeybee and solitary bees against inflammation and cancer.</title>
        <authorList>
            <person name="Erkoc P."/>
            <person name="von Reumont B.M."/>
            <person name="Lueddecke T."/>
            <person name="Henke M."/>
            <person name="Ulshoefer T."/>
            <person name="Vilcinskas A."/>
            <person name="Fuerst R."/>
            <person name="Schiffmann S."/>
        </authorList>
    </citation>
    <scope>FUNCTION</scope>
</reference>
<accession>C0HL98</accession>
<keyword id="KW-0027">Amidation</keyword>
<keyword id="KW-0044">Antibiotic</keyword>
<keyword id="KW-0929">Antimicrobial</keyword>
<keyword id="KW-0903">Direct protein sequencing</keyword>
<keyword id="KW-0295">Fungicide</keyword>
<keyword id="KW-0472">Membrane</keyword>
<keyword id="KW-0964">Secreted</keyword>
<keyword id="KW-1052">Target cell membrane</keyword>
<keyword id="KW-1053">Target membrane</keyword>
<name>MAC1_MACFV</name>
<proteinExistence type="evidence at protein level"/>
<organism evidence="4">
    <name type="scientific">Macropis fulvipes</name>
    <name type="common">Solitary bee</name>
    <name type="synonym">Megilla fulvipes</name>
    <dbReference type="NCBI Taxonomy" id="465486"/>
    <lineage>
        <taxon>Eukaryota</taxon>
        <taxon>Metazoa</taxon>
        <taxon>Ecdysozoa</taxon>
        <taxon>Arthropoda</taxon>
        <taxon>Hexapoda</taxon>
        <taxon>Insecta</taxon>
        <taxon>Pterygota</taxon>
        <taxon>Neoptera</taxon>
        <taxon>Endopterygota</taxon>
        <taxon>Hymenoptera</taxon>
        <taxon>Apocrita</taxon>
        <taxon>Aculeata</taxon>
        <taxon>Apoidea</taxon>
        <taxon>Anthophila</taxon>
        <taxon>Melittinae</taxon>
        <taxon>Macropis</taxon>
    </lineage>
</organism>
<feature type="peptide" id="PRO_0000444296" description="Macropin" evidence="1">
    <location>
        <begin position="1"/>
        <end position="13"/>
    </location>
</feature>
<feature type="modified residue" description="Leucine amide" evidence="1">
    <location>
        <position position="13"/>
    </location>
</feature>
<feature type="mutagenesis site" description="Slightly reduced antimicrobial activity. Even weaker hemolytic activity." evidence="1">
    <original>G</original>
    <variation>A</variation>
    <location>
        <position position="1"/>
    </location>
</feature>
<feature type="mutagenesis site" description="Slightly reduced activity against Gram-negative bacteria and fungi. Increased hemolytic activity." evidence="1">
    <original>G</original>
    <variation>L</variation>
    <location>
        <position position="1"/>
    </location>
</feature>
<feature type="mutagenesis site" description="Slightly increased antimicrobial activity." evidence="1">
    <original>G</original>
    <variation>K</variation>
    <location>
        <position position="3"/>
    </location>
</feature>
<feature type="mutagenesis site" description="Slightly increased activity against Gram-negative bacteria and fungi but decreased activity against Gram-positive bacteria. No hemolytic activity." evidence="1">
    <original>M</original>
    <variation>K</variation>
    <location>
        <position position="4"/>
    </location>
</feature>